<gene>
    <name evidence="1" type="primary">aroA</name>
    <name type="ordered locus">Sbal_2068</name>
</gene>
<feature type="chain" id="PRO_1000012468" description="3-phosphoshikimate 1-carboxyvinyltransferase">
    <location>
        <begin position="1"/>
        <end position="426"/>
    </location>
</feature>
<feature type="active site" description="Proton acceptor" evidence="1">
    <location>
        <position position="314"/>
    </location>
</feature>
<feature type="binding site" evidence="1">
    <location>
        <position position="22"/>
    </location>
    <ligand>
        <name>3-phosphoshikimate</name>
        <dbReference type="ChEBI" id="CHEBI:145989"/>
    </ligand>
</feature>
<feature type="binding site" evidence="1">
    <location>
        <position position="22"/>
    </location>
    <ligand>
        <name>phosphoenolpyruvate</name>
        <dbReference type="ChEBI" id="CHEBI:58702"/>
    </ligand>
</feature>
<feature type="binding site" evidence="1">
    <location>
        <position position="23"/>
    </location>
    <ligand>
        <name>3-phosphoshikimate</name>
        <dbReference type="ChEBI" id="CHEBI:145989"/>
    </ligand>
</feature>
<feature type="binding site" evidence="1">
    <location>
        <position position="27"/>
    </location>
    <ligand>
        <name>3-phosphoshikimate</name>
        <dbReference type="ChEBI" id="CHEBI:145989"/>
    </ligand>
</feature>
<feature type="binding site" evidence="1">
    <location>
        <position position="96"/>
    </location>
    <ligand>
        <name>phosphoenolpyruvate</name>
        <dbReference type="ChEBI" id="CHEBI:58702"/>
    </ligand>
</feature>
<feature type="binding site" evidence="1">
    <location>
        <position position="124"/>
    </location>
    <ligand>
        <name>phosphoenolpyruvate</name>
        <dbReference type="ChEBI" id="CHEBI:58702"/>
    </ligand>
</feature>
<feature type="binding site" evidence="1">
    <location>
        <position position="170"/>
    </location>
    <ligand>
        <name>3-phosphoshikimate</name>
        <dbReference type="ChEBI" id="CHEBI:145989"/>
    </ligand>
</feature>
<feature type="binding site" evidence="1">
    <location>
        <position position="171"/>
    </location>
    <ligand>
        <name>3-phosphoshikimate</name>
        <dbReference type="ChEBI" id="CHEBI:145989"/>
    </ligand>
</feature>
<feature type="binding site" evidence="1">
    <location>
        <position position="172"/>
    </location>
    <ligand>
        <name>3-phosphoshikimate</name>
        <dbReference type="ChEBI" id="CHEBI:145989"/>
    </ligand>
</feature>
<feature type="binding site" evidence="1">
    <location>
        <position position="172"/>
    </location>
    <ligand>
        <name>phosphoenolpyruvate</name>
        <dbReference type="ChEBI" id="CHEBI:58702"/>
    </ligand>
</feature>
<feature type="binding site" evidence="1">
    <location>
        <position position="198"/>
    </location>
    <ligand>
        <name>3-phosphoshikimate</name>
        <dbReference type="ChEBI" id="CHEBI:145989"/>
    </ligand>
</feature>
<feature type="binding site" evidence="1">
    <location>
        <position position="314"/>
    </location>
    <ligand>
        <name>3-phosphoshikimate</name>
        <dbReference type="ChEBI" id="CHEBI:145989"/>
    </ligand>
</feature>
<feature type="binding site" evidence="1">
    <location>
        <position position="337"/>
    </location>
    <ligand>
        <name>3-phosphoshikimate</name>
        <dbReference type="ChEBI" id="CHEBI:145989"/>
    </ligand>
</feature>
<feature type="binding site" evidence="1">
    <location>
        <position position="341"/>
    </location>
    <ligand>
        <name>3-phosphoshikimate</name>
        <dbReference type="ChEBI" id="CHEBI:145989"/>
    </ligand>
</feature>
<feature type="binding site" evidence="1">
    <location>
        <position position="345"/>
    </location>
    <ligand>
        <name>phosphoenolpyruvate</name>
        <dbReference type="ChEBI" id="CHEBI:58702"/>
    </ligand>
</feature>
<feature type="binding site" evidence="1">
    <location>
        <position position="387"/>
    </location>
    <ligand>
        <name>phosphoenolpyruvate</name>
        <dbReference type="ChEBI" id="CHEBI:58702"/>
    </ligand>
</feature>
<feature type="binding site" evidence="1">
    <location>
        <position position="412"/>
    </location>
    <ligand>
        <name>phosphoenolpyruvate</name>
        <dbReference type="ChEBI" id="CHEBI:58702"/>
    </ligand>
</feature>
<comment type="function">
    <text evidence="1">Catalyzes the transfer of the enolpyruvyl moiety of phosphoenolpyruvate (PEP) to the 5-hydroxyl of shikimate-3-phosphate (S3P) to produce enolpyruvyl shikimate-3-phosphate and inorganic phosphate.</text>
</comment>
<comment type="catalytic activity">
    <reaction evidence="1">
        <text>3-phosphoshikimate + phosphoenolpyruvate = 5-O-(1-carboxyvinyl)-3-phosphoshikimate + phosphate</text>
        <dbReference type="Rhea" id="RHEA:21256"/>
        <dbReference type="ChEBI" id="CHEBI:43474"/>
        <dbReference type="ChEBI" id="CHEBI:57701"/>
        <dbReference type="ChEBI" id="CHEBI:58702"/>
        <dbReference type="ChEBI" id="CHEBI:145989"/>
        <dbReference type="EC" id="2.5.1.19"/>
    </reaction>
    <physiologicalReaction direction="left-to-right" evidence="1">
        <dbReference type="Rhea" id="RHEA:21257"/>
    </physiologicalReaction>
</comment>
<comment type="pathway">
    <text evidence="1">Metabolic intermediate biosynthesis; chorismate biosynthesis; chorismate from D-erythrose 4-phosphate and phosphoenolpyruvate: step 6/7.</text>
</comment>
<comment type="subunit">
    <text evidence="1">Monomer.</text>
</comment>
<comment type="subcellular location">
    <subcellularLocation>
        <location evidence="1">Cytoplasm</location>
    </subcellularLocation>
</comment>
<comment type="similarity">
    <text evidence="1">Belongs to the EPSP synthase family.</text>
</comment>
<name>AROA_SHEB5</name>
<sequence length="426" mass="45700">MKQLRLEPVVQVRGEINIPGSKSISNRALLLATLAQGTTTLTNLLDSDDIRHMLASLKQLGVNYRLSQNNTVCELDGLGGVISSESAQELFLGNAGTAMRPLCAALTLGQGEFTLTGEPRMEERPIGDLVDALRQLGANVVYLKNDGFPPLTINATGLSGGDVEIAGDLSSQFLTALLMVAPLAKGSVNIHVKGELVSKPYIDITLALMAQFGVTVINHDYARFEIVAGQRYVSPGKVLVEGDASSASYFLAAGAIKGGEVKVTGVGRLSIQGDVKFADVLEKMGADIEWGDDYIIARGSQLTAVDLDMNHIPDAAMTIATAALFAKGTTVIRNIYNWRIKETDRLAAMATELRKVGAEVEEGNDYIKITPPAVINTAEIDTYNDHRMAMCFSMLAFADCGITINDPDCTSKTFPDYFKQFASLQG</sequence>
<accession>A3D4A6</accession>
<protein>
    <recommendedName>
        <fullName evidence="1">3-phosphoshikimate 1-carboxyvinyltransferase</fullName>
        <ecNumber evidence="1">2.5.1.19</ecNumber>
    </recommendedName>
    <alternativeName>
        <fullName evidence="1">5-enolpyruvylshikimate-3-phosphate synthase</fullName>
        <shortName evidence="1">EPSP synthase</shortName>
        <shortName evidence="1">EPSPS</shortName>
    </alternativeName>
</protein>
<proteinExistence type="inferred from homology"/>
<dbReference type="EC" id="2.5.1.19" evidence="1"/>
<dbReference type="EMBL" id="CP000563">
    <property type="protein sequence ID" value="ABN61569.1"/>
    <property type="molecule type" value="Genomic_DNA"/>
</dbReference>
<dbReference type="RefSeq" id="WP_011846774.1">
    <property type="nucleotide sequence ID" value="NC_009052.1"/>
</dbReference>
<dbReference type="SMR" id="A3D4A6"/>
<dbReference type="STRING" id="325240.Sbal_2068"/>
<dbReference type="KEGG" id="sbl:Sbal_2068"/>
<dbReference type="HOGENOM" id="CLU_024321_0_0_6"/>
<dbReference type="OrthoDB" id="9809920at2"/>
<dbReference type="UniPathway" id="UPA00053">
    <property type="reaction ID" value="UER00089"/>
</dbReference>
<dbReference type="Proteomes" id="UP000001557">
    <property type="component" value="Chromosome"/>
</dbReference>
<dbReference type="GO" id="GO:0005737">
    <property type="term" value="C:cytoplasm"/>
    <property type="evidence" value="ECO:0007669"/>
    <property type="project" value="UniProtKB-SubCell"/>
</dbReference>
<dbReference type="GO" id="GO:0003866">
    <property type="term" value="F:3-phosphoshikimate 1-carboxyvinyltransferase activity"/>
    <property type="evidence" value="ECO:0007669"/>
    <property type="project" value="UniProtKB-UniRule"/>
</dbReference>
<dbReference type="GO" id="GO:0008652">
    <property type="term" value="P:amino acid biosynthetic process"/>
    <property type="evidence" value="ECO:0007669"/>
    <property type="project" value="UniProtKB-KW"/>
</dbReference>
<dbReference type="GO" id="GO:0009073">
    <property type="term" value="P:aromatic amino acid family biosynthetic process"/>
    <property type="evidence" value="ECO:0007669"/>
    <property type="project" value="UniProtKB-KW"/>
</dbReference>
<dbReference type="GO" id="GO:0009423">
    <property type="term" value="P:chorismate biosynthetic process"/>
    <property type="evidence" value="ECO:0007669"/>
    <property type="project" value="UniProtKB-UniRule"/>
</dbReference>
<dbReference type="CDD" id="cd01556">
    <property type="entry name" value="EPSP_synthase"/>
    <property type="match status" value="1"/>
</dbReference>
<dbReference type="FunFam" id="3.65.10.10:FF:000003">
    <property type="entry name" value="3-phosphoshikimate 1-carboxyvinyltransferase"/>
    <property type="match status" value="1"/>
</dbReference>
<dbReference type="FunFam" id="3.65.10.10:FF:000004">
    <property type="entry name" value="3-phosphoshikimate 1-carboxyvinyltransferase"/>
    <property type="match status" value="1"/>
</dbReference>
<dbReference type="Gene3D" id="3.65.10.10">
    <property type="entry name" value="Enolpyruvate transferase domain"/>
    <property type="match status" value="2"/>
</dbReference>
<dbReference type="HAMAP" id="MF_00210">
    <property type="entry name" value="EPSP_synth"/>
    <property type="match status" value="1"/>
</dbReference>
<dbReference type="InterPro" id="IPR001986">
    <property type="entry name" value="Enolpyruvate_Tfrase_dom"/>
</dbReference>
<dbReference type="InterPro" id="IPR036968">
    <property type="entry name" value="Enolpyruvate_Tfrase_sf"/>
</dbReference>
<dbReference type="InterPro" id="IPR006264">
    <property type="entry name" value="EPSP_synthase"/>
</dbReference>
<dbReference type="InterPro" id="IPR023193">
    <property type="entry name" value="EPSP_synthase_CS"/>
</dbReference>
<dbReference type="InterPro" id="IPR013792">
    <property type="entry name" value="RNA3'P_cycl/enolpyr_Trfase_a/b"/>
</dbReference>
<dbReference type="NCBIfam" id="TIGR01356">
    <property type="entry name" value="aroA"/>
    <property type="match status" value="1"/>
</dbReference>
<dbReference type="PANTHER" id="PTHR21090">
    <property type="entry name" value="AROM/DEHYDROQUINATE SYNTHASE"/>
    <property type="match status" value="1"/>
</dbReference>
<dbReference type="PANTHER" id="PTHR21090:SF5">
    <property type="entry name" value="PENTAFUNCTIONAL AROM POLYPEPTIDE"/>
    <property type="match status" value="1"/>
</dbReference>
<dbReference type="Pfam" id="PF00275">
    <property type="entry name" value="EPSP_synthase"/>
    <property type="match status" value="1"/>
</dbReference>
<dbReference type="PIRSF" id="PIRSF000505">
    <property type="entry name" value="EPSPS"/>
    <property type="match status" value="1"/>
</dbReference>
<dbReference type="SUPFAM" id="SSF55205">
    <property type="entry name" value="EPT/RTPC-like"/>
    <property type="match status" value="1"/>
</dbReference>
<dbReference type="PROSITE" id="PS00104">
    <property type="entry name" value="EPSP_SYNTHASE_1"/>
    <property type="match status" value="1"/>
</dbReference>
<dbReference type="PROSITE" id="PS00885">
    <property type="entry name" value="EPSP_SYNTHASE_2"/>
    <property type="match status" value="1"/>
</dbReference>
<reference key="1">
    <citation type="submission" date="2007-02" db="EMBL/GenBank/DDBJ databases">
        <title>Complete sequence of chromosome of Shewanella baltica OS155.</title>
        <authorList>
            <consortium name="US DOE Joint Genome Institute"/>
            <person name="Copeland A."/>
            <person name="Lucas S."/>
            <person name="Lapidus A."/>
            <person name="Barry K."/>
            <person name="Detter J.C."/>
            <person name="Glavina del Rio T."/>
            <person name="Hammon N."/>
            <person name="Israni S."/>
            <person name="Dalin E."/>
            <person name="Tice H."/>
            <person name="Pitluck S."/>
            <person name="Sims D.R."/>
            <person name="Brettin T."/>
            <person name="Bruce D."/>
            <person name="Han C."/>
            <person name="Tapia R."/>
            <person name="Brainard J."/>
            <person name="Schmutz J."/>
            <person name="Larimer F."/>
            <person name="Land M."/>
            <person name="Hauser L."/>
            <person name="Kyrpides N."/>
            <person name="Mikhailova N."/>
            <person name="Brettar I."/>
            <person name="Klappenbach J."/>
            <person name="Konstantinidis K."/>
            <person name="Rodrigues J."/>
            <person name="Tiedje J."/>
            <person name="Richardson P."/>
        </authorList>
    </citation>
    <scope>NUCLEOTIDE SEQUENCE [LARGE SCALE GENOMIC DNA]</scope>
    <source>
        <strain>OS155 / ATCC BAA-1091</strain>
    </source>
</reference>
<keyword id="KW-0028">Amino-acid biosynthesis</keyword>
<keyword id="KW-0057">Aromatic amino acid biosynthesis</keyword>
<keyword id="KW-0963">Cytoplasm</keyword>
<keyword id="KW-1185">Reference proteome</keyword>
<keyword id="KW-0808">Transferase</keyword>
<evidence type="ECO:0000255" key="1">
    <source>
        <dbReference type="HAMAP-Rule" id="MF_00210"/>
    </source>
</evidence>
<organism>
    <name type="scientific">Shewanella baltica (strain OS155 / ATCC BAA-1091)</name>
    <dbReference type="NCBI Taxonomy" id="325240"/>
    <lineage>
        <taxon>Bacteria</taxon>
        <taxon>Pseudomonadati</taxon>
        <taxon>Pseudomonadota</taxon>
        <taxon>Gammaproteobacteria</taxon>
        <taxon>Alteromonadales</taxon>
        <taxon>Shewanellaceae</taxon>
        <taxon>Shewanella</taxon>
    </lineage>
</organism>